<accession>A0QLU8</accession>
<gene>
    <name evidence="1" type="primary">ackA</name>
    <name type="ordered locus">MAV_4758</name>
</gene>
<organism>
    <name type="scientific">Mycobacterium avium (strain 104)</name>
    <dbReference type="NCBI Taxonomy" id="243243"/>
    <lineage>
        <taxon>Bacteria</taxon>
        <taxon>Bacillati</taxon>
        <taxon>Actinomycetota</taxon>
        <taxon>Actinomycetes</taxon>
        <taxon>Mycobacteriales</taxon>
        <taxon>Mycobacteriaceae</taxon>
        <taxon>Mycobacterium</taxon>
        <taxon>Mycobacterium avium complex (MAC)</taxon>
    </lineage>
</organism>
<sequence>MDGSDGARRVLVINSGSSSLKFQLVDPESGVAASTGIVERIGEESSPVPDHDAALRRAFDMLAGDGVDLNTAGLVAVGHRVVHGGNTFYRPTVLDDAVIARLHELSELAPLHNPPALLGIEVARRLLPGIAHVAVFDTGFFHDLPPAAATYAIDRELADRWQIRRYGFHGTSHRYVSEQAAAFLDRPLRGLKQIVLHLGNGCSASAIAGTRPLDTSMGLTPLEGLVMGTRSGDIDPSVVSYLCHTAGMGVDDVESMLNHRSGVVGLSGVRDFRRLRELIESGDGAAQLAYSVFTHRLRKYIGAYLAVLGHTDVISFTAGIGENDAAVRRDAVSGMEELGIVLDERRNLPGAKGARQISADDSPITVLVVPTNEELAIARDCVRVLGG</sequence>
<protein>
    <recommendedName>
        <fullName evidence="1">Acetate kinase</fullName>
        <ecNumber evidence="1">2.7.2.1</ecNumber>
    </recommendedName>
    <alternativeName>
        <fullName evidence="1">Acetokinase</fullName>
    </alternativeName>
</protein>
<feature type="chain" id="PRO_0000421950" description="Acetate kinase">
    <location>
        <begin position="1"/>
        <end position="387"/>
    </location>
</feature>
<feature type="active site" description="Proton donor/acceptor" evidence="1">
    <location>
        <position position="137"/>
    </location>
</feature>
<feature type="binding site" evidence="1">
    <location>
        <position position="14"/>
    </location>
    <ligand>
        <name>Mg(2+)</name>
        <dbReference type="ChEBI" id="CHEBI:18420"/>
    </ligand>
</feature>
<feature type="binding site" evidence="1">
    <location>
        <position position="21"/>
    </location>
    <ligand>
        <name>ATP</name>
        <dbReference type="ChEBI" id="CHEBI:30616"/>
    </ligand>
</feature>
<feature type="binding site" evidence="1">
    <location>
        <position position="80"/>
    </location>
    <ligand>
        <name>substrate</name>
    </ligand>
</feature>
<feature type="binding site" evidence="1">
    <location>
        <begin position="197"/>
        <end position="201"/>
    </location>
    <ligand>
        <name>ATP</name>
        <dbReference type="ChEBI" id="CHEBI:30616"/>
    </ligand>
</feature>
<feature type="binding site" evidence="1">
    <location>
        <begin position="271"/>
        <end position="273"/>
    </location>
    <ligand>
        <name>ATP</name>
        <dbReference type="ChEBI" id="CHEBI:30616"/>
    </ligand>
</feature>
<feature type="binding site" evidence="1">
    <location>
        <begin position="319"/>
        <end position="323"/>
    </location>
    <ligand>
        <name>ATP</name>
        <dbReference type="ChEBI" id="CHEBI:30616"/>
    </ligand>
</feature>
<feature type="binding site" evidence="1">
    <location>
        <position position="373"/>
    </location>
    <ligand>
        <name>Mg(2+)</name>
        <dbReference type="ChEBI" id="CHEBI:18420"/>
    </ligand>
</feature>
<feature type="site" description="Transition state stabilizer" evidence="1">
    <location>
        <position position="169"/>
    </location>
</feature>
<feature type="site" description="Transition state stabilizer" evidence="1">
    <location>
        <position position="230"/>
    </location>
</feature>
<feature type="strand" evidence="3">
    <location>
        <begin position="9"/>
        <end position="15"/>
    </location>
</feature>
<feature type="strand" evidence="3">
    <location>
        <begin position="20"/>
        <end position="25"/>
    </location>
</feature>
<feature type="turn" evidence="3">
    <location>
        <begin position="27"/>
        <end position="29"/>
    </location>
</feature>
<feature type="strand" evidence="3">
    <location>
        <begin position="32"/>
        <end position="38"/>
    </location>
</feature>
<feature type="helix" evidence="3">
    <location>
        <begin position="51"/>
        <end position="64"/>
    </location>
</feature>
<feature type="turn" evidence="3">
    <location>
        <begin position="70"/>
        <end position="73"/>
    </location>
</feature>
<feature type="strand" evidence="3">
    <location>
        <begin position="74"/>
        <end position="82"/>
    </location>
</feature>
<feature type="turn" evidence="3">
    <location>
        <begin position="85"/>
        <end position="87"/>
    </location>
</feature>
<feature type="helix" evidence="3">
    <location>
        <begin position="96"/>
        <end position="103"/>
    </location>
</feature>
<feature type="turn" evidence="3">
    <location>
        <begin position="104"/>
        <end position="108"/>
    </location>
</feature>
<feature type="turn" evidence="3">
    <location>
        <begin position="110"/>
        <end position="112"/>
    </location>
</feature>
<feature type="helix" evidence="3">
    <location>
        <begin position="113"/>
        <end position="126"/>
    </location>
</feature>
<feature type="strand" evidence="3">
    <location>
        <begin position="130"/>
        <end position="136"/>
    </location>
</feature>
<feature type="helix" evidence="3">
    <location>
        <begin position="139"/>
        <end position="141"/>
    </location>
</feature>
<feature type="helix" evidence="3">
    <location>
        <begin position="146"/>
        <end position="149"/>
    </location>
</feature>
<feature type="helix" evidence="3">
    <location>
        <begin position="155"/>
        <end position="161"/>
    </location>
</feature>
<feature type="helix" evidence="3">
    <location>
        <begin position="170"/>
        <end position="184"/>
    </location>
</feature>
<feature type="helix" evidence="3">
    <location>
        <begin position="188"/>
        <end position="190"/>
    </location>
</feature>
<feature type="strand" evidence="3">
    <location>
        <begin position="192"/>
        <end position="208"/>
    </location>
</feature>
<feature type="strand" evidence="3">
    <location>
        <begin position="211"/>
        <end position="216"/>
    </location>
</feature>
<feature type="strand" evidence="3">
    <location>
        <begin position="223"/>
        <end position="225"/>
    </location>
</feature>
<feature type="helix" evidence="3">
    <location>
        <begin position="237"/>
        <end position="245"/>
    </location>
</feature>
<feature type="helix" evidence="3">
    <location>
        <begin position="250"/>
        <end position="259"/>
    </location>
</feature>
<feature type="helix" evidence="3">
    <location>
        <begin position="262"/>
        <end position="267"/>
    </location>
</feature>
<feature type="helix" evidence="3">
    <location>
        <begin position="272"/>
        <end position="280"/>
    </location>
</feature>
<feature type="helix" evidence="3">
    <location>
        <begin position="284"/>
        <end position="308"/>
    </location>
</feature>
<feature type="strand" evidence="3">
    <location>
        <begin position="313"/>
        <end position="317"/>
    </location>
</feature>
<feature type="helix" evidence="3">
    <location>
        <begin position="318"/>
        <end position="323"/>
    </location>
</feature>
<feature type="helix" evidence="3">
    <location>
        <begin position="325"/>
        <end position="332"/>
    </location>
</feature>
<feature type="helix" evidence="3">
    <location>
        <begin position="336"/>
        <end position="338"/>
    </location>
</feature>
<feature type="turn" evidence="3">
    <location>
        <begin position="344"/>
        <end position="347"/>
    </location>
</feature>
<feature type="strand" evidence="3">
    <location>
        <begin position="353"/>
        <end position="356"/>
    </location>
</feature>
<feature type="strand" evidence="3">
    <location>
        <begin position="363"/>
        <end position="368"/>
    </location>
</feature>
<feature type="helix" evidence="3">
    <location>
        <begin position="373"/>
        <end position="384"/>
    </location>
</feature>
<proteinExistence type="evidence at protein level"/>
<dbReference type="EC" id="2.7.2.1" evidence="1"/>
<dbReference type="EMBL" id="CP000479">
    <property type="protein sequence ID" value="ABK64849.1"/>
    <property type="molecule type" value="Genomic_DNA"/>
</dbReference>
<dbReference type="RefSeq" id="WP_011726229.1">
    <property type="nucleotide sequence ID" value="NC_008595.1"/>
</dbReference>
<dbReference type="PDB" id="3P4I">
    <property type="method" value="X-ray"/>
    <property type="resolution" value="2.35 A"/>
    <property type="chains" value="A/B=2-387"/>
</dbReference>
<dbReference type="PDB" id="4IZ9">
    <property type="method" value="X-ray"/>
    <property type="resolution" value="1.98 A"/>
    <property type="chains" value="A=2-387"/>
</dbReference>
<dbReference type="PDBsum" id="3P4I"/>
<dbReference type="PDBsum" id="4IZ9"/>
<dbReference type="SMR" id="A0QLU8"/>
<dbReference type="KEGG" id="mav:MAV_4758"/>
<dbReference type="HOGENOM" id="CLU_020352_0_1_11"/>
<dbReference type="UniPathway" id="UPA00340">
    <property type="reaction ID" value="UER00458"/>
</dbReference>
<dbReference type="EvolutionaryTrace" id="A0QLU8"/>
<dbReference type="Proteomes" id="UP000001574">
    <property type="component" value="Chromosome"/>
</dbReference>
<dbReference type="GO" id="GO:0005737">
    <property type="term" value="C:cytoplasm"/>
    <property type="evidence" value="ECO:0007669"/>
    <property type="project" value="UniProtKB-SubCell"/>
</dbReference>
<dbReference type="GO" id="GO:0008776">
    <property type="term" value="F:acetate kinase activity"/>
    <property type="evidence" value="ECO:0007669"/>
    <property type="project" value="UniProtKB-UniRule"/>
</dbReference>
<dbReference type="GO" id="GO:0005524">
    <property type="term" value="F:ATP binding"/>
    <property type="evidence" value="ECO:0007669"/>
    <property type="project" value="UniProtKB-KW"/>
</dbReference>
<dbReference type="GO" id="GO:0000287">
    <property type="term" value="F:magnesium ion binding"/>
    <property type="evidence" value="ECO:0007669"/>
    <property type="project" value="UniProtKB-UniRule"/>
</dbReference>
<dbReference type="GO" id="GO:0006083">
    <property type="term" value="P:acetate metabolic process"/>
    <property type="evidence" value="ECO:0007669"/>
    <property type="project" value="TreeGrafter"/>
</dbReference>
<dbReference type="GO" id="GO:0006085">
    <property type="term" value="P:acetyl-CoA biosynthetic process"/>
    <property type="evidence" value="ECO:0007669"/>
    <property type="project" value="UniProtKB-UniRule"/>
</dbReference>
<dbReference type="CDD" id="cd24010">
    <property type="entry name" value="ASKHA_NBD_AcK_PK"/>
    <property type="match status" value="1"/>
</dbReference>
<dbReference type="Gene3D" id="3.30.420.40">
    <property type="match status" value="2"/>
</dbReference>
<dbReference type="HAMAP" id="MF_00020">
    <property type="entry name" value="Acetate_kinase"/>
    <property type="match status" value="1"/>
</dbReference>
<dbReference type="InterPro" id="IPR004372">
    <property type="entry name" value="Ac/propionate_kinase"/>
</dbReference>
<dbReference type="InterPro" id="IPR000890">
    <property type="entry name" value="Aliphatic_acid_kin_short-chain"/>
</dbReference>
<dbReference type="InterPro" id="IPR023865">
    <property type="entry name" value="Aliphatic_acid_kinase_CS"/>
</dbReference>
<dbReference type="InterPro" id="IPR043129">
    <property type="entry name" value="ATPase_NBD"/>
</dbReference>
<dbReference type="NCBIfam" id="TIGR00016">
    <property type="entry name" value="ackA"/>
    <property type="match status" value="1"/>
</dbReference>
<dbReference type="PANTHER" id="PTHR21060">
    <property type="entry name" value="ACETATE KINASE"/>
    <property type="match status" value="1"/>
</dbReference>
<dbReference type="PANTHER" id="PTHR21060:SF15">
    <property type="entry name" value="ACETATE KINASE-RELATED"/>
    <property type="match status" value="1"/>
</dbReference>
<dbReference type="Pfam" id="PF00871">
    <property type="entry name" value="Acetate_kinase"/>
    <property type="match status" value="1"/>
</dbReference>
<dbReference type="PIRSF" id="PIRSF000722">
    <property type="entry name" value="Acetate_prop_kin"/>
    <property type="match status" value="1"/>
</dbReference>
<dbReference type="PRINTS" id="PR00471">
    <property type="entry name" value="ACETATEKNASE"/>
</dbReference>
<dbReference type="SUPFAM" id="SSF53067">
    <property type="entry name" value="Actin-like ATPase domain"/>
    <property type="match status" value="2"/>
</dbReference>
<dbReference type="PROSITE" id="PS01075">
    <property type="entry name" value="ACETATE_KINASE_1"/>
    <property type="match status" value="1"/>
</dbReference>
<name>ACKA_MYCA1</name>
<comment type="function">
    <text evidence="1">Catalyzes the formation of acetyl phosphate from acetate and ATP. Can also catalyze the reverse reaction.</text>
</comment>
<comment type="catalytic activity">
    <reaction evidence="1">
        <text>acetate + ATP = acetyl phosphate + ADP</text>
        <dbReference type="Rhea" id="RHEA:11352"/>
        <dbReference type="ChEBI" id="CHEBI:22191"/>
        <dbReference type="ChEBI" id="CHEBI:30089"/>
        <dbReference type="ChEBI" id="CHEBI:30616"/>
        <dbReference type="ChEBI" id="CHEBI:456216"/>
        <dbReference type="EC" id="2.7.2.1"/>
    </reaction>
</comment>
<comment type="cofactor">
    <cofactor evidence="1">
        <name>Mg(2+)</name>
        <dbReference type="ChEBI" id="CHEBI:18420"/>
    </cofactor>
    <cofactor evidence="1">
        <name>Mn(2+)</name>
        <dbReference type="ChEBI" id="CHEBI:29035"/>
    </cofactor>
    <text evidence="1">Mg(2+). Can also accept Mn(2+).</text>
</comment>
<comment type="pathway">
    <text evidence="1">Metabolic intermediate biosynthesis; acetyl-CoA biosynthesis; acetyl-CoA from acetate: step 1/2.</text>
</comment>
<comment type="subunit">
    <text evidence="2">Homodimer.</text>
</comment>
<comment type="subcellular location">
    <subcellularLocation>
        <location evidence="1">Cytoplasm</location>
    </subcellularLocation>
</comment>
<comment type="similarity">
    <text evidence="1">Belongs to the acetokinase family.</text>
</comment>
<reference key="1">
    <citation type="submission" date="2006-10" db="EMBL/GenBank/DDBJ databases">
        <authorList>
            <person name="Fleischmann R.D."/>
            <person name="Dodson R.J."/>
            <person name="Haft D.H."/>
            <person name="Merkel J.S."/>
            <person name="Nelson W.C."/>
            <person name="Fraser C.M."/>
        </authorList>
    </citation>
    <scope>NUCLEOTIDE SEQUENCE [LARGE SCALE GENOMIC DNA]</scope>
    <source>
        <strain>104</strain>
    </source>
</reference>
<reference key="2">
    <citation type="submission" date="2010-10" db="PDB data bank">
        <title>Crystal structure of acetate kinase from Mycobacterium avium.</title>
        <authorList>
            <consortium name="Seattle structural genomics center for infectious disease (SSGCID)"/>
            <person name="Edwards T.E."/>
            <person name="Gardberg A.S."/>
        </authorList>
    </citation>
    <scope>X-RAY CRYSTALLOGRAPHY (2.35 ANGSTROMS)</scope>
    <scope>SUBUNIT</scope>
    <source>
        <strain>104</strain>
    </source>
</reference>
<evidence type="ECO:0000255" key="1">
    <source>
        <dbReference type="HAMAP-Rule" id="MF_00020"/>
    </source>
</evidence>
<evidence type="ECO:0000305" key="2">
    <source ref="2"/>
</evidence>
<evidence type="ECO:0007829" key="3">
    <source>
        <dbReference type="PDB" id="4IZ9"/>
    </source>
</evidence>
<keyword id="KW-0002">3D-structure</keyword>
<keyword id="KW-0067">ATP-binding</keyword>
<keyword id="KW-0963">Cytoplasm</keyword>
<keyword id="KW-0418">Kinase</keyword>
<keyword id="KW-0460">Magnesium</keyword>
<keyword id="KW-0479">Metal-binding</keyword>
<keyword id="KW-0547">Nucleotide-binding</keyword>
<keyword id="KW-0808">Transferase</keyword>